<proteinExistence type="evidence at protein level"/>
<evidence type="ECO:0000250" key="1"/>
<evidence type="ECO:0000250" key="2">
    <source>
        <dbReference type="UniProtKB" id="Q9NP74"/>
    </source>
</evidence>
<evidence type="ECO:0000255" key="3"/>
<evidence type="ECO:0000256" key="4">
    <source>
        <dbReference type="SAM" id="MobiDB-lite"/>
    </source>
</evidence>
<evidence type="ECO:0000269" key="5">
    <source>
    </source>
</evidence>
<evidence type="ECO:0000269" key="6">
    <source>
    </source>
</evidence>
<evidence type="ECO:0000305" key="7"/>
<evidence type="ECO:0007744" key="8">
    <source>
    </source>
</evidence>
<evidence type="ECO:0007744" key="9">
    <source>
    </source>
</evidence>
<sequence length="551" mass="62700">MEEAELVKGRLQAITDKRKIQEEISQKRLKIEEEKLKHQHLKKKALREKWLLDGIGSGKEHEEMRKQNQQDQHQTQVLEQSILRLEKEIQDLEKAELQISANEEAILKKLKSIEKTTEDIIRSVKVEKEENPEESIEDIYANIPDLPSSYIPSRLRKERNEGPDDEQNRKALYAMEIKVEKDLKTGESVVLSSIPLPSDDFKSTGIKVYEDRQKSVYAVSSNQNTTYNGTDGLAPVEVEDLLRQASERNSKSPTEYHEPVYANPFCRPVTPQRERVISPGPNFQERIMMKTNGLGNHANESAHNMTDGLSERRSNGPTHTSPTRPTPQPRSMVQQVEEMVHTQQKRMASPWEESSNRQNEHEVSPRMELSPSRASPGKSGPQCSSPTCQEETEDVRYNIVHSLPSDVDDTEPVTMIFMGYQQADDNEEEKKLLTGYDGVIHAELVVIDDEAEDNEGQTERPSYHPVAPYNQVYQPPKPTPLPRKRAEVRPYENTNHKSPHKNSISLKEQEERLGSPARHSPLDVPVAGDGTEDPSLTALRIRMAKLGKKVI</sequence>
<comment type="subunit">
    <text evidence="6">Interacts with GLUL.</text>
</comment>
<comment type="subcellular location">
    <subcellularLocation>
        <location>Cytoplasm</location>
    </subcellularLocation>
    <subcellularLocation>
        <location>Cell projection</location>
        <location>Dendrite</location>
    </subcellularLocation>
    <subcellularLocation>
        <location evidence="1">Cell projection</location>
        <location evidence="1">Dendritic spine</location>
    </subcellularLocation>
</comment>
<comment type="tissue specificity">
    <text evidence="5">Ubiquitous. Expressed at highest levels in the heart and lung.</text>
</comment>
<comment type="PTM">
    <text evidence="6">Phosphorylated.</text>
</comment>
<comment type="similarity">
    <text evidence="7">Belongs to the paralemmin family.</text>
</comment>
<keyword id="KW-0007">Acetylation</keyword>
<keyword id="KW-0966">Cell projection</keyword>
<keyword id="KW-0175">Coiled coil</keyword>
<keyword id="KW-0963">Cytoplasm</keyword>
<keyword id="KW-1017">Isopeptide bond</keyword>
<keyword id="KW-0597">Phosphoprotein</keyword>
<keyword id="KW-1185">Reference proteome</keyword>
<keyword id="KW-0770">Synapse</keyword>
<keyword id="KW-0832">Ubl conjugation</keyword>
<feature type="chain" id="PRO_0000262529" description="Palmdelphin">
    <location>
        <begin position="1"/>
        <end position="551"/>
    </location>
</feature>
<feature type="region of interest" description="Disordered" evidence="4">
    <location>
        <begin position="247"/>
        <end position="266"/>
    </location>
</feature>
<feature type="region of interest" description="Disordered" evidence="4">
    <location>
        <begin position="294"/>
        <end position="390"/>
    </location>
</feature>
<feature type="region of interest" description="Disordered" evidence="4">
    <location>
        <begin position="451"/>
        <end position="533"/>
    </location>
</feature>
<feature type="coiled-coil region" evidence="3">
    <location>
        <begin position="12"/>
        <end position="106"/>
    </location>
</feature>
<feature type="compositionally biased region" description="Basic and acidic residues" evidence="4">
    <location>
        <begin position="247"/>
        <end position="258"/>
    </location>
</feature>
<feature type="compositionally biased region" description="Polar residues" evidence="4">
    <location>
        <begin position="341"/>
        <end position="353"/>
    </location>
</feature>
<feature type="compositionally biased region" description="Basic and acidic residues" evidence="4">
    <location>
        <begin position="354"/>
        <end position="365"/>
    </location>
</feature>
<feature type="modified residue" description="N-acetylmethionine" evidence="2">
    <location>
        <position position="1"/>
    </location>
</feature>
<feature type="modified residue" description="Phosphoserine" evidence="2">
    <location>
        <position position="135"/>
    </location>
</feature>
<feature type="modified residue" description="Phosphothreonine" evidence="9">
    <location>
        <position position="270"/>
    </location>
</feature>
<feature type="modified residue" description="Phosphoserine" evidence="2">
    <location>
        <position position="321"/>
    </location>
</feature>
<feature type="modified residue" description="Phosphoserine" evidence="8 9">
    <location>
        <position position="349"/>
    </location>
</feature>
<feature type="modified residue" description="Phosphoserine" evidence="9">
    <location>
        <position position="370"/>
    </location>
</feature>
<feature type="modified residue" description="Phosphoserine" evidence="8 9">
    <location>
        <position position="375"/>
    </location>
</feature>
<feature type="modified residue" description="Phosphoserine" evidence="9">
    <location>
        <position position="384"/>
    </location>
</feature>
<feature type="modified residue" description="Phosphoserine" evidence="9">
    <location>
        <position position="385"/>
    </location>
</feature>
<feature type="modified residue" description="Phosphoserine" evidence="2">
    <location>
        <position position="498"/>
    </location>
</feature>
<feature type="modified residue" description="Phosphoserine" evidence="9">
    <location>
        <position position="515"/>
    </location>
</feature>
<feature type="modified residue" description="Phosphoserine" evidence="8 9">
    <location>
        <position position="520"/>
    </location>
</feature>
<feature type="cross-link" description="Glycyl lysine isopeptide (Lys-Gly) (interchain with G-Cter in SUMO2)" evidence="2">
    <location>
        <position position="125"/>
    </location>
</feature>
<feature type="cross-link" description="Glycyl lysine isopeptide (Lys-Gly) (interchain with G-Cter in SUMO1); alternate" evidence="2">
    <location>
        <position position="178"/>
    </location>
</feature>
<feature type="cross-link" description="Glycyl lysine isopeptide (Lys-Gly) (interchain with G-Cter in SUMO2); alternate" evidence="2">
    <location>
        <position position="178"/>
    </location>
</feature>
<feature type="sequence conflict" description="In Ref. 2; CAC59696 and 4; BAB29414/BAE42708." evidence="7" ref="2 4">
    <original>R</original>
    <variation>K</variation>
    <location>
        <position position="65"/>
    </location>
</feature>
<feature type="sequence conflict" description="In Ref. 4; BAB29414." evidence="7" ref="4">
    <original>P</original>
    <variation>H</variation>
    <location>
        <position position="144"/>
    </location>
</feature>
<feature type="sequence conflict" description="In Ref. 4; BAE42708." evidence="7" ref="4">
    <original>V</original>
    <variation>I</variation>
    <location>
        <position position="395"/>
    </location>
</feature>
<feature type="sequence conflict" description="In Ref. 2; CAC59696 and 4; BAB29414/BAE42708." evidence="7" ref="2 4">
    <original>N</original>
    <variation>S</variation>
    <location>
        <position position="470"/>
    </location>
</feature>
<name>PALMD_MOUSE</name>
<organism>
    <name type="scientific">Mus musculus</name>
    <name type="common">Mouse</name>
    <dbReference type="NCBI Taxonomy" id="10090"/>
    <lineage>
        <taxon>Eukaryota</taxon>
        <taxon>Metazoa</taxon>
        <taxon>Chordata</taxon>
        <taxon>Craniata</taxon>
        <taxon>Vertebrata</taxon>
        <taxon>Euteleostomi</taxon>
        <taxon>Mammalia</taxon>
        <taxon>Eutheria</taxon>
        <taxon>Euarchontoglires</taxon>
        <taxon>Glires</taxon>
        <taxon>Rodentia</taxon>
        <taxon>Myomorpha</taxon>
        <taxon>Muroidea</taxon>
        <taxon>Muridae</taxon>
        <taxon>Murinae</taxon>
        <taxon>Mus</taxon>
        <taxon>Mus</taxon>
    </lineage>
</organism>
<protein>
    <recommendedName>
        <fullName>Palmdelphin</fullName>
    </recommendedName>
</protein>
<dbReference type="EMBL" id="AF263246">
    <property type="protein sequence ID" value="AAK48507.1"/>
    <property type="molecule type" value="mRNA"/>
</dbReference>
<dbReference type="EMBL" id="AJ312215">
    <property type="protein sequence ID" value="CAC59696.1"/>
    <property type="molecule type" value="mRNA"/>
</dbReference>
<dbReference type="EMBL" id="AL391037">
    <property type="protein sequence ID" value="CAC01530.1"/>
    <property type="molecule type" value="mRNA"/>
</dbReference>
<dbReference type="EMBL" id="AK014531">
    <property type="protein sequence ID" value="BAB29414.1"/>
    <property type="molecule type" value="mRNA"/>
</dbReference>
<dbReference type="EMBL" id="AK171869">
    <property type="protein sequence ID" value="BAE42708.1"/>
    <property type="molecule type" value="mRNA"/>
</dbReference>
<dbReference type="EMBL" id="BC010193">
    <property type="protein sequence ID" value="AAH10193.1"/>
    <property type="molecule type" value="mRNA"/>
</dbReference>
<dbReference type="CCDS" id="CCDS17793.1"/>
<dbReference type="RefSeq" id="NP_075734.3">
    <property type="nucleotide sequence ID" value="NM_023245.3"/>
</dbReference>
<dbReference type="SMR" id="Q9JHU2"/>
<dbReference type="BioGRID" id="227669">
    <property type="interactions" value="2"/>
</dbReference>
<dbReference type="FunCoup" id="Q9JHU2">
    <property type="interactions" value="53"/>
</dbReference>
<dbReference type="STRING" id="10090.ENSMUSP00000044693"/>
<dbReference type="GlyGen" id="Q9JHU2">
    <property type="glycosylation" value="2 sites, 1 O-linked glycan (1 site)"/>
</dbReference>
<dbReference type="iPTMnet" id="Q9JHU2"/>
<dbReference type="PhosphoSitePlus" id="Q9JHU2"/>
<dbReference type="jPOST" id="Q9JHU2"/>
<dbReference type="PaxDb" id="10090-ENSMUSP00000044693"/>
<dbReference type="ProteomicsDB" id="294102"/>
<dbReference type="DNASU" id="114301"/>
<dbReference type="GeneID" id="114301"/>
<dbReference type="KEGG" id="mmu:114301"/>
<dbReference type="AGR" id="MGI:2148896"/>
<dbReference type="CTD" id="54873"/>
<dbReference type="MGI" id="MGI:2148896">
    <property type="gene designation" value="Palmd"/>
</dbReference>
<dbReference type="eggNOG" id="ENOG502QVMH">
    <property type="taxonomic scope" value="Eukaryota"/>
</dbReference>
<dbReference type="InParanoid" id="Q9JHU2"/>
<dbReference type="OrthoDB" id="9937247at2759"/>
<dbReference type="PhylomeDB" id="Q9JHU2"/>
<dbReference type="TreeFam" id="TF105402"/>
<dbReference type="BioGRID-ORCS" id="114301">
    <property type="hits" value="1 hit in 76 CRISPR screens"/>
</dbReference>
<dbReference type="ChiTaRS" id="Palmd">
    <property type="organism name" value="mouse"/>
</dbReference>
<dbReference type="PRO" id="PR:Q9JHU2"/>
<dbReference type="Proteomes" id="UP000000589">
    <property type="component" value="Unplaced"/>
</dbReference>
<dbReference type="RNAct" id="Q9JHU2">
    <property type="molecule type" value="protein"/>
</dbReference>
<dbReference type="GO" id="GO:0005737">
    <property type="term" value="C:cytoplasm"/>
    <property type="evidence" value="ECO:0000314"/>
    <property type="project" value="UniProtKB"/>
</dbReference>
<dbReference type="GO" id="GO:0043197">
    <property type="term" value="C:dendritic spine"/>
    <property type="evidence" value="ECO:0007669"/>
    <property type="project" value="UniProtKB-SubCell"/>
</dbReference>
<dbReference type="GO" id="GO:0016020">
    <property type="term" value="C:membrane"/>
    <property type="evidence" value="ECO:0007669"/>
    <property type="project" value="InterPro"/>
</dbReference>
<dbReference type="GO" id="GO:0008360">
    <property type="term" value="P:regulation of cell shape"/>
    <property type="evidence" value="ECO:0007669"/>
    <property type="project" value="InterPro"/>
</dbReference>
<dbReference type="InterPro" id="IPR004965">
    <property type="entry name" value="Paralemmin"/>
</dbReference>
<dbReference type="PANTHER" id="PTHR46881">
    <property type="entry name" value="PALMDELPHIN"/>
    <property type="match status" value="1"/>
</dbReference>
<dbReference type="PANTHER" id="PTHR46881:SF1">
    <property type="entry name" value="PALMDELPHIN"/>
    <property type="match status" value="1"/>
</dbReference>
<dbReference type="Pfam" id="PF03285">
    <property type="entry name" value="Paralemmin"/>
    <property type="match status" value="2"/>
</dbReference>
<reference key="1">
    <citation type="journal article" date="2001" name="Gene">
        <title>PALML, a novel paralemmin-related gene mapping on human chromosome 1p21.</title>
        <authorList>
            <person name="Andreu N."/>
            <person name="Escarceller M."/>
            <person name="Feather S."/>
            <person name="Devriendt K."/>
            <person name="Wolf A.S."/>
            <person name="Estivill X."/>
            <person name="Sumoy L."/>
        </authorList>
    </citation>
    <scope>NUCLEOTIDE SEQUENCE [MRNA]</scope>
    <source>
        <strain>C57BL/6J</strain>
        <tissue>Mammary gland</tissue>
    </source>
</reference>
<reference key="2">
    <citation type="journal article" date="2001" name="Biochem. Biophys. Res. Commun.">
        <title>The paralemmin protein family: identification of paralemmin-2, an isoform differentially spliced to AKAP2/AKAP-KL, and of palmdelphin, a more distant cytosolic relative.</title>
        <authorList>
            <person name="Hu B."/>
            <person name="Copeland N.G."/>
            <person name="Gilbert D.J."/>
            <person name="Jenkins N.A."/>
            <person name="Kilimann M.W."/>
        </authorList>
    </citation>
    <scope>NUCLEOTIDE SEQUENCE [MRNA]</scope>
    <scope>SUBCELLULAR LOCATION</scope>
    <scope>TISSUE SPECIFICITY</scope>
    <source>
        <tissue>Muscle</tissue>
    </source>
</reference>
<reference key="3">
    <citation type="submission" date="2000-08" db="EMBL/GenBank/DDBJ databases">
        <authorList>
            <consortium name="The European IMAGE consortium"/>
        </authorList>
    </citation>
    <scope>NUCLEOTIDE SEQUENCE [LARGE SCALE MRNA]</scope>
</reference>
<reference key="4">
    <citation type="journal article" date="2005" name="Science">
        <title>The transcriptional landscape of the mammalian genome.</title>
        <authorList>
            <person name="Carninci P."/>
            <person name="Kasukawa T."/>
            <person name="Katayama S."/>
            <person name="Gough J."/>
            <person name="Frith M.C."/>
            <person name="Maeda N."/>
            <person name="Oyama R."/>
            <person name="Ravasi T."/>
            <person name="Lenhard B."/>
            <person name="Wells C."/>
            <person name="Kodzius R."/>
            <person name="Shimokawa K."/>
            <person name="Bajic V.B."/>
            <person name="Brenner S.E."/>
            <person name="Batalov S."/>
            <person name="Forrest A.R."/>
            <person name="Zavolan M."/>
            <person name="Davis M.J."/>
            <person name="Wilming L.G."/>
            <person name="Aidinis V."/>
            <person name="Allen J.E."/>
            <person name="Ambesi-Impiombato A."/>
            <person name="Apweiler R."/>
            <person name="Aturaliya R.N."/>
            <person name="Bailey T.L."/>
            <person name="Bansal M."/>
            <person name="Baxter L."/>
            <person name="Beisel K.W."/>
            <person name="Bersano T."/>
            <person name="Bono H."/>
            <person name="Chalk A.M."/>
            <person name="Chiu K.P."/>
            <person name="Choudhary V."/>
            <person name="Christoffels A."/>
            <person name="Clutterbuck D.R."/>
            <person name="Crowe M.L."/>
            <person name="Dalla E."/>
            <person name="Dalrymple B.P."/>
            <person name="de Bono B."/>
            <person name="Della Gatta G."/>
            <person name="di Bernardo D."/>
            <person name="Down T."/>
            <person name="Engstrom P."/>
            <person name="Fagiolini M."/>
            <person name="Faulkner G."/>
            <person name="Fletcher C.F."/>
            <person name="Fukushima T."/>
            <person name="Furuno M."/>
            <person name="Futaki S."/>
            <person name="Gariboldi M."/>
            <person name="Georgii-Hemming P."/>
            <person name="Gingeras T.R."/>
            <person name="Gojobori T."/>
            <person name="Green R.E."/>
            <person name="Gustincich S."/>
            <person name="Harbers M."/>
            <person name="Hayashi Y."/>
            <person name="Hensch T.K."/>
            <person name="Hirokawa N."/>
            <person name="Hill D."/>
            <person name="Huminiecki L."/>
            <person name="Iacono M."/>
            <person name="Ikeo K."/>
            <person name="Iwama A."/>
            <person name="Ishikawa T."/>
            <person name="Jakt M."/>
            <person name="Kanapin A."/>
            <person name="Katoh M."/>
            <person name="Kawasawa Y."/>
            <person name="Kelso J."/>
            <person name="Kitamura H."/>
            <person name="Kitano H."/>
            <person name="Kollias G."/>
            <person name="Krishnan S.P."/>
            <person name="Kruger A."/>
            <person name="Kummerfeld S.K."/>
            <person name="Kurochkin I.V."/>
            <person name="Lareau L.F."/>
            <person name="Lazarevic D."/>
            <person name="Lipovich L."/>
            <person name="Liu J."/>
            <person name="Liuni S."/>
            <person name="McWilliam S."/>
            <person name="Madan Babu M."/>
            <person name="Madera M."/>
            <person name="Marchionni L."/>
            <person name="Matsuda H."/>
            <person name="Matsuzawa S."/>
            <person name="Miki H."/>
            <person name="Mignone F."/>
            <person name="Miyake S."/>
            <person name="Morris K."/>
            <person name="Mottagui-Tabar S."/>
            <person name="Mulder N."/>
            <person name="Nakano N."/>
            <person name="Nakauchi H."/>
            <person name="Ng P."/>
            <person name="Nilsson R."/>
            <person name="Nishiguchi S."/>
            <person name="Nishikawa S."/>
            <person name="Nori F."/>
            <person name="Ohara O."/>
            <person name="Okazaki Y."/>
            <person name="Orlando V."/>
            <person name="Pang K.C."/>
            <person name="Pavan W.J."/>
            <person name="Pavesi G."/>
            <person name="Pesole G."/>
            <person name="Petrovsky N."/>
            <person name="Piazza S."/>
            <person name="Reed J."/>
            <person name="Reid J.F."/>
            <person name="Ring B.Z."/>
            <person name="Ringwald M."/>
            <person name="Rost B."/>
            <person name="Ruan Y."/>
            <person name="Salzberg S.L."/>
            <person name="Sandelin A."/>
            <person name="Schneider C."/>
            <person name="Schoenbach C."/>
            <person name="Sekiguchi K."/>
            <person name="Semple C.A."/>
            <person name="Seno S."/>
            <person name="Sessa L."/>
            <person name="Sheng Y."/>
            <person name="Shibata Y."/>
            <person name="Shimada H."/>
            <person name="Shimada K."/>
            <person name="Silva D."/>
            <person name="Sinclair B."/>
            <person name="Sperling S."/>
            <person name="Stupka E."/>
            <person name="Sugiura K."/>
            <person name="Sultana R."/>
            <person name="Takenaka Y."/>
            <person name="Taki K."/>
            <person name="Tammoja K."/>
            <person name="Tan S.L."/>
            <person name="Tang S."/>
            <person name="Taylor M.S."/>
            <person name="Tegner J."/>
            <person name="Teichmann S.A."/>
            <person name="Ueda H.R."/>
            <person name="van Nimwegen E."/>
            <person name="Verardo R."/>
            <person name="Wei C.L."/>
            <person name="Yagi K."/>
            <person name="Yamanishi H."/>
            <person name="Zabarovsky E."/>
            <person name="Zhu S."/>
            <person name="Zimmer A."/>
            <person name="Hide W."/>
            <person name="Bult C."/>
            <person name="Grimmond S.M."/>
            <person name="Teasdale R.D."/>
            <person name="Liu E.T."/>
            <person name="Brusic V."/>
            <person name="Quackenbush J."/>
            <person name="Wahlestedt C."/>
            <person name="Mattick J.S."/>
            <person name="Hume D.A."/>
            <person name="Kai C."/>
            <person name="Sasaki D."/>
            <person name="Tomaru Y."/>
            <person name="Fukuda S."/>
            <person name="Kanamori-Katayama M."/>
            <person name="Suzuki M."/>
            <person name="Aoki J."/>
            <person name="Arakawa T."/>
            <person name="Iida J."/>
            <person name="Imamura K."/>
            <person name="Itoh M."/>
            <person name="Kato T."/>
            <person name="Kawaji H."/>
            <person name="Kawagashira N."/>
            <person name="Kawashima T."/>
            <person name="Kojima M."/>
            <person name="Kondo S."/>
            <person name="Konno H."/>
            <person name="Nakano K."/>
            <person name="Ninomiya N."/>
            <person name="Nishio T."/>
            <person name="Okada M."/>
            <person name="Plessy C."/>
            <person name="Shibata K."/>
            <person name="Shiraki T."/>
            <person name="Suzuki S."/>
            <person name="Tagami M."/>
            <person name="Waki K."/>
            <person name="Watahiki A."/>
            <person name="Okamura-Oho Y."/>
            <person name="Suzuki H."/>
            <person name="Kawai J."/>
            <person name="Hayashizaki Y."/>
        </authorList>
    </citation>
    <scope>NUCLEOTIDE SEQUENCE [LARGE SCALE MRNA]</scope>
    <source>
        <strain>C57BL/6J</strain>
        <strain>NOD</strain>
        <tissue>Skin</tissue>
        <tissue>Spleen</tissue>
    </source>
</reference>
<reference key="5">
    <citation type="journal article" date="2004" name="Genome Res.">
        <title>The status, quality, and expansion of the NIH full-length cDNA project: the Mammalian Gene Collection (MGC).</title>
        <authorList>
            <consortium name="The MGC Project Team"/>
        </authorList>
    </citation>
    <scope>NUCLEOTIDE SEQUENCE [LARGE SCALE MRNA]</scope>
    <source>
        <strain>FVB/N</strain>
        <tissue>Mammary tumor</tissue>
    </source>
</reference>
<reference key="6">
    <citation type="journal article" date="2005" name="Eur. J. Cell Biol.">
        <title>Molecular characterization and immunohistochemical localization of palmdelphin, a cytosolic isoform of the paralemmin protein family implicated in membrane dynamics.</title>
        <authorList>
            <person name="Hu B."/>
            <person name="Petrasch-Parwez E."/>
            <person name="Laue M.M."/>
            <person name="Kilimann M.W."/>
        </authorList>
    </citation>
    <scope>FUNCTION</scope>
    <scope>INTERACTION WITH GLUL</scope>
    <scope>SUBCELLULAR LOCATION</scope>
    <scope>PHOSPHORYLATION</scope>
</reference>
<reference key="7">
    <citation type="journal article" date="2007" name="Proc. Natl. Acad. Sci. U.S.A.">
        <title>Large-scale phosphorylation analysis of mouse liver.</title>
        <authorList>
            <person name="Villen J."/>
            <person name="Beausoleil S.A."/>
            <person name="Gerber S.A."/>
            <person name="Gygi S.P."/>
        </authorList>
    </citation>
    <scope>PHOSPHORYLATION [LARGE SCALE ANALYSIS] AT SER-349; SER-375 AND SER-520</scope>
    <scope>IDENTIFICATION BY MASS SPECTROMETRY [LARGE SCALE ANALYSIS]</scope>
    <source>
        <tissue>Liver</tissue>
    </source>
</reference>
<reference key="8">
    <citation type="journal article" date="2010" name="Cell">
        <title>A tissue-specific atlas of mouse protein phosphorylation and expression.</title>
        <authorList>
            <person name="Huttlin E.L."/>
            <person name="Jedrychowski M.P."/>
            <person name="Elias J.E."/>
            <person name="Goswami T."/>
            <person name="Rad R."/>
            <person name="Beausoleil S.A."/>
            <person name="Villen J."/>
            <person name="Haas W."/>
            <person name="Sowa M.E."/>
            <person name="Gygi S.P."/>
        </authorList>
    </citation>
    <scope>PHOSPHORYLATION [LARGE SCALE ANALYSIS] AT THR-270; SER-349; SER-370; SER-375; SER-384; SER-385; SER-515 AND SER-520</scope>
    <scope>IDENTIFICATION BY MASS SPECTROMETRY [LARGE SCALE ANALYSIS]</scope>
    <source>
        <tissue>Brain</tissue>
        <tissue>Brown adipose tissue</tissue>
        <tissue>Heart</tissue>
        <tissue>Liver</tissue>
        <tissue>Lung</tissue>
        <tissue>Pancreas</tissue>
        <tissue>Spleen</tissue>
    </source>
</reference>
<gene>
    <name type="primary">Palmd</name>
</gene>
<accession>Q9JHU2</accession>
<accession>Q3TAG0</accession>
<accession>Q91X00</accession>
<accession>Q9D693</accession>